<proteinExistence type="inferred from homology"/>
<reference key="1">
    <citation type="journal article" date="2005" name="Nat. Biotechnol.">
        <title>Complete genome sequence of the acetic acid bacterium Gluconobacter oxydans.</title>
        <authorList>
            <person name="Prust C."/>
            <person name="Hoffmeister M."/>
            <person name="Liesegang H."/>
            <person name="Wiezer A."/>
            <person name="Fricke W.F."/>
            <person name="Ehrenreich A."/>
            <person name="Gottschalk G."/>
            <person name="Deppenmeier U."/>
        </authorList>
    </citation>
    <scope>NUCLEOTIDE SEQUENCE [LARGE SCALE GENOMIC DNA]</scope>
    <source>
        <strain>621H</strain>
    </source>
</reference>
<comment type="function">
    <text evidence="1">Cell wall formation.</text>
</comment>
<comment type="catalytic activity">
    <reaction evidence="1">
        <text>UDP-N-acetyl-alpha-D-muramate + L-alanine + ATP = UDP-N-acetyl-alpha-D-muramoyl-L-alanine + ADP + phosphate + H(+)</text>
        <dbReference type="Rhea" id="RHEA:23372"/>
        <dbReference type="ChEBI" id="CHEBI:15378"/>
        <dbReference type="ChEBI" id="CHEBI:30616"/>
        <dbReference type="ChEBI" id="CHEBI:43474"/>
        <dbReference type="ChEBI" id="CHEBI:57972"/>
        <dbReference type="ChEBI" id="CHEBI:70757"/>
        <dbReference type="ChEBI" id="CHEBI:83898"/>
        <dbReference type="ChEBI" id="CHEBI:456216"/>
        <dbReference type="EC" id="6.3.2.8"/>
    </reaction>
</comment>
<comment type="pathway">
    <text evidence="1">Cell wall biogenesis; peptidoglycan biosynthesis.</text>
</comment>
<comment type="subcellular location">
    <subcellularLocation>
        <location evidence="1">Cytoplasm</location>
    </subcellularLocation>
</comment>
<comment type="similarity">
    <text evidence="1">Belongs to the MurCDEF family.</text>
</comment>
<name>MURC_GLUOX</name>
<organism>
    <name type="scientific">Gluconobacter oxydans (strain 621H)</name>
    <name type="common">Gluconobacter suboxydans</name>
    <dbReference type="NCBI Taxonomy" id="290633"/>
    <lineage>
        <taxon>Bacteria</taxon>
        <taxon>Pseudomonadati</taxon>
        <taxon>Pseudomonadota</taxon>
        <taxon>Alphaproteobacteria</taxon>
        <taxon>Acetobacterales</taxon>
        <taxon>Acetobacteraceae</taxon>
        <taxon>Gluconobacter</taxon>
    </lineage>
</organism>
<dbReference type="EC" id="6.3.2.8" evidence="1"/>
<dbReference type="EMBL" id="CP000009">
    <property type="protein sequence ID" value="AAW59952.1"/>
    <property type="molecule type" value="Genomic_DNA"/>
</dbReference>
<dbReference type="RefSeq" id="WP_011251755.1">
    <property type="nucleotide sequence ID" value="NC_006677.1"/>
</dbReference>
<dbReference type="SMR" id="Q5FUJ4"/>
<dbReference type="STRING" id="290633.GOX0159"/>
<dbReference type="KEGG" id="gox:GOX0159"/>
<dbReference type="eggNOG" id="COG0773">
    <property type="taxonomic scope" value="Bacteria"/>
</dbReference>
<dbReference type="HOGENOM" id="CLU_028104_2_2_5"/>
<dbReference type="UniPathway" id="UPA00219"/>
<dbReference type="Proteomes" id="UP000006375">
    <property type="component" value="Chromosome"/>
</dbReference>
<dbReference type="GO" id="GO:0005737">
    <property type="term" value="C:cytoplasm"/>
    <property type="evidence" value="ECO:0007669"/>
    <property type="project" value="UniProtKB-SubCell"/>
</dbReference>
<dbReference type="GO" id="GO:0005524">
    <property type="term" value="F:ATP binding"/>
    <property type="evidence" value="ECO:0007669"/>
    <property type="project" value="UniProtKB-UniRule"/>
</dbReference>
<dbReference type="GO" id="GO:0008763">
    <property type="term" value="F:UDP-N-acetylmuramate-L-alanine ligase activity"/>
    <property type="evidence" value="ECO:0007669"/>
    <property type="project" value="UniProtKB-UniRule"/>
</dbReference>
<dbReference type="GO" id="GO:0051301">
    <property type="term" value="P:cell division"/>
    <property type="evidence" value="ECO:0007669"/>
    <property type="project" value="UniProtKB-KW"/>
</dbReference>
<dbReference type="GO" id="GO:0071555">
    <property type="term" value="P:cell wall organization"/>
    <property type="evidence" value="ECO:0007669"/>
    <property type="project" value="UniProtKB-KW"/>
</dbReference>
<dbReference type="GO" id="GO:0009252">
    <property type="term" value="P:peptidoglycan biosynthetic process"/>
    <property type="evidence" value="ECO:0007669"/>
    <property type="project" value="UniProtKB-UniRule"/>
</dbReference>
<dbReference type="GO" id="GO:0008360">
    <property type="term" value="P:regulation of cell shape"/>
    <property type="evidence" value="ECO:0007669"/>
    <property type="project" value="UniProtKB-KW"/>
</dbReference>
<dbReference type="Gene3D" id="3.90.190.20">
    <property type="entry name" value="Mur ligase, C-terminal domain"/>
    <property type="match status" value="1"/>
</dbReference>
<dbReference type="Gene3D" id="3.40.1190.10">
    <property type="entry name" value="Mur-like, catalytic domain"/>
    <property type="match status" value="1"/>
</dbReference>
<dbReference type="Gene3D" id="3.40.50.720">
    <property type="entry name" value="NAD(P)-binding Rossmann-like Domain"/>
    <property type="match status" value="1"/>
</dbReference>
<dbReference type="HAMAP" id="MF_00046">
    <property type="entry name" value="MurC"/>
    <property type="match status" value="1"/>
</dbReference>
<dbReference type="InterPro" id="IPR036565">
    <property type="entry name" value="Mur-like_cat_sf"/>
</dbReference>
<dbReference type="InterPro" id="IPR004101">
    <property type="entry name" value="Mur_ligase_C"/>
</dbReference>
<dbReference type="InterPro" id="IPR036615">
    <property type="entry name" value="Mur_ligase_C_dom_sf"/>
</dbReference>
<dbReference type="InterPro" id="IPR013221">
    <property type="entry name" value="Mur_ligase_cen"/>
</dbReference>
<dbReference type="InterPro" id="IPR000713">
    <property type="entry name" value="Mur_ligase_N"/>
</dbReference>
<dbReference type="InterPro" id="IPR050061">
    <property type="entry name" value="MurCDEF_pg_biosynth"/>
</dbReference>
<dbReference type="InterPro" id="IPR005758">
    <property type="entry name" value="UDP-N-AcMur_Ala_ligase_MurC"/>
</dbReference>
<dbReference type="NCBIfam" id="TIGR01082">
    <property type="entry name" value="murC"/>
    <property type="match status" value="1"/>
</dbReference>
<dbReference type="PANTHER" id="PTHR43445:SF3">
    <property type="entry name" value="UDP-N-ACETYLMURAMATE--L-ALANINE LIGASE"/>
    <property type="match status" value="1"/>
</dbReference>
<dbReference type="PANTHER" id="PTHR43445">
    <property type="entry name" value="UDP-N-ACETYLMURAMATE--L-ALANINE LIGASE-RELATED"/>
    <property type="match status" value="1"/>
</dbReference>
<dbReference type="Pfam" id="PF01225">
    <property type="entry name" value="Mur_ligase"/>
    <property type="match status" value="1"/>
</dbReference>
<dbReference type="Pfam" id="PF02875">
    <property type="entry name" value="Mur_ligase_C"/>
    <property type="match status" value="1"/>
</dbReference>
<dbReference type="Pfam" id="PF08245">
    <property type="entry name" value="Mur_ligase_M"/>
    <property type="match status" value="1"/>
</dbReference>
<dbReference type="SUPFAM" id="SSF51984">
    <property type="entry name" value="MurCD N-terminal domain"/>
    <property type="match status" value="1"/>
</dbReference>
<dbReference type="SUPFAM" id="SSF53623">
    <property type="entry name" value="MurD-like peptide ligases, catalytic domain"/>
    <property type="match status" value="1"/>
</dbReference>
<dbReference type="SUPFAM" id="SSF53244">
    <property type="entry name" value="MurD-like peptide ligases, peptide-binding domain"/>
    <property type="match status" value="1"/>
</dbReference>
<gene>
    <name evidence="1" type="primary">murC</name>
    <name type="ordered locus">GOX0159</name>
</gene>
<sequence>MRALPLNIGTIHFVGIGGIGMSGIAEVLHMLGYKVQGSDIAEGANVQRLRQAGIVVHIGHDAANLGDAQVVVTSTAVKKDNPEVVAARAKLIPVVRRAEMLAELMRLRWSVAIGGTHGKTTTTSLVACVLEHARLDPTVINGGIIEAYGTNTRMGSGDWMVVEADESDGSFLRLPAVIAVVTNMDPEHLDHWGTEEAMQAGYDQFVSNIPFYGFAVLCVDHPQVQQMIPRLSDHRVITYGFSPQADIRAEKVVMDKRGATFEVVVTNRQRNRSRRAGPFRLPMLGHHNVLNSLAAIAVALEMEISDSVIASALTTFKGVKRRFTRTGEYNGISIVDDYGHHPVEIAAVLKAARQAGARNVIAVMQPHRYSRLKVLFNEFCTCMNDADTVIVADVYAAGETPIEGAGRDALVEGLRDRGHRSVVPLPDPAHLAEMINAIAKPGDYVVCLGAGTITQWAQALPAQLEALNRQPATEGAA</sequence>
<protein>
    <recommendedName>
        <fullName evidence="1">UDP-N-acetylmuramate--L-alanine ligase</fullName>
        <ecNumber evidence="1">6.3.2.8</ecNumber>
    </recommendedName>
    <alternativeName>
        <fullName evidence="1">UDP-N-acetylmuramoyl-L-alanine synthetase</fullName>
    </alternativeName>
</protein>
<accession>Q5FUJ4</accession>
<keyword id="KW-0067">ATP-binding</keyword>
<keyword id="KW-0131">Cell cycle</keyword>
<keyword id="KW-0132">Cell division</keyword>
<keyword id="KW-0133">Cell shape</keyword>
<keyword id="KW-0961">Cell wall biogenesis/degradation</keyword>
<keyword id="KW-0963">Cytoplasm</keyword>
<keyword id="KW-0436">Ligase</keyword>
<keyword id="KW-0547">Nucleotide-binding</keyword>
<keyword id="KW-0573">Peptidoglycan synthesis</keyword>
<keyword id="KW-1185">Reference proteome</keyword>
<feature type="chain" id="PRO_0000242559" description="UDP-N-acetylmuramate--L-alanine ligase">
    <location>
        <begin position="1"/>
        <end position="477"/>
    </location>
</feature>
<feature type="binding site" evidence="1">
    <location>
        <begin position="115"/>
        <end position="121"/>
    </location>
    <ligand>
        <name>ATP</name>
        <dbReference type="ChEBI" id="CHEBI:30616"/>
    </ligand>
</feature>
<evidence type="ECO:0000255" key="1">
    <source>
        <dbReference type="HAMAP-Rule" id="MF_00046"/>
    </source>
</evidence>